<organism>
    <name type="scientific">Exiguobacterium sibiricum (strain DSM 17290 / CCUG 55495 / CIP 109462 / JCM 13490 / 255-15)</name>
    <dbReference type="NCBI Taxonomy" id="262543"/>
    <lineage>
        <taxon>Bacteria</taxon>
        <taxon>Bacillati</taxon>
        <taxon>Bacillota</taxon>
        <taxon>Bacilli</taxon>
        <taxon>Bacillales</taxon>
        <taxon>Bacillales Family XII. Incertae Sedis</taxon>
        <taxon>Exiguobacterium</taxon>
    </lineage>
</organism>
<proteinExistence type="inferred from homology"/>
<evidence type="ECO:0000255" key="1">
    <source>
        <dbReference type="HAMAP-Rule" id="MF_00054"/>
    </source>
</evidence>
<feature type="chain" id="PRO_1000091711" description="Elongation factor G">
    <location>
        <begin position="1"/>
        <end position="692"/>
    </location>
</feature>
<feature type="domain" description="tr-type G">
    <location>
        <begin position="8"/>
        <end position="283"/>
    </location>
</feature>
<feature type="binding site" evidence="1">
    <location>
        <begin position="17"/>
        <end position="24"/>
    </location>
    <ligand>
        <name>GTP</name>
        <dbReference type="ChEBI" id="CHEBI:37565"/>
    </ligand>
</feature>
<feature type="binding site" evidence="1">
    <location>
        <begin position="81"/>
        <end position="85"/>
    </location>
    <ligand>
        <name>GTP</name>
        <dbReference type="ChEBI" id="CHEBI:37565"/>
    </ligand>
</feature>
<feature type="binding site" evidence="1">
    <location>
        <begin position="135"/>
        <end position="138"/>
    </location>
    <ligand>
        <name>GTP</name>
        <dbReference type="ChEBI" id="CHEBI:37565"/>
    </ligand>
</feature>
<sequence>MAREFSLKNTRNIGIMAHIDAGKTTTTERILYYTGRIHKIGETHEGASQMDWMEQEQERGITITSAATTAQWKGNRVNIIDTPGHVDFTVEVERSLRVLDGAVAVLDAQSGVEPQTETVWRQATTYGVPRIVFVNKMDKIGADFLYSVGTLRDRLQANAHAIQIPIGAEDEFKGIIDLVEKKTYMYGNDLGTDIEETEGFPAEFAEEAEELRASLIEAVADYEEEMMMKYLEGEEITIEELKAGIRKATLTVDFYPVLVGSAFKNKGVQLMLDAVLDYLPSPVDVKAITGINMDTDEEIVRESTDEAPFSALAFKVMTDPYVGKLTFFRVYSGTASAGSYVKNSTKGKRERLGRILQMHANSREEIPMVFAGDIAAAVGLKDTTTGDTLCAEKDNVVLESMTFPEPVISVAIEPKTKADQDKMGQALAKLAEEDPTFRTETNPETGQTIISGMGELHLDIIVDRMRREFKVEANVGAPQVAYRETIRQSAKIDSKFARQSGGRGQYGHVVVEFEPNEEGAGFEFNNKIVGGVVPREYIPAVEHGIEEALQNGILAGYPVVDVKAALVFGSYHDVDSNEMAFKIAASMAVKQLKDKSGAVILEPMMKVEIVIPDEYMGDIMGDVTSRRGRVEGMEARGNAQVVRSMIPLSEMFGYATGLRSRTQGRGTYSMHFDHYEEVPKSVAEEIIKKANG</sequence>
<accession>B1YGU7</accession>
<keyword id="KW-0963">Cytoplasm</keyword>
<keyword id="KW-0251">Elongation factor</keyword>
<keyword id="KW-0342">GTP-binding</keyword>
<keyword id="KW-0547">Nucleotide-binding</keyword>
<keyword id="KW-0648">Protein biosynthesis</keyword>
<keyword id="KW-1185">Reference proteome</keyword>
<dbReference type="EMBL" id="CP001022">
    <property type="protein sequence ID" value="ACB59580.1"/>
    <property type="molecule type" value="Genomic_DNA"/>
</dbReference>
<dbReference type="RefSeq" id="WP_012369006.1">
    <property type="nucleotide sequence ID" value="NC_010556.1"/>
</dbReference>
<dbReference type="SMR" id="B1YGU7"/>
<dbReference type="STRING" id="262543.Exig_0093"/>
<dbReference type="KEGG" id="esi:Exig_0093"/>
<dbReference type="eggNOG" id="COG0480">
    <property type="taxonomic scope" value="Bacteria"/>
</dbReference>
<dbReference type="HOGENOM" id="CLU_002794_4_1_9"/>
<dbReference type="OrthoDB" id="9804431at2"/>
<dbReference type="Proteomes" id="UP000001681">
    <property type="component" value="Chromosome"/>
</dbReference>
<dbReference type="GO" id="GO:0005737">
    <property type="term" value="C:cytoplasm"/>
    <property type="evidence" value="ECO:0007669"/>
    <property type="project" value="UniProtKB-SubCell"/>
</dbReference>
<dbReference type="GO" id="GO:0005525">
    <property type="term" value="F:GTP binding"/>
    <property type="evidence" value="ECO:0007669"/>
    <property type="project" value="UniProtKB-UniRule"/>
</dbReference>
<dbReference type="GO" id="GO:0003924">
    <property type="term" value="F:GTPase activity"/>
    <property type="evidence" value="ECO:0007669"/>
    <property type="project" value="InterPro"/>
</dbReference>
<dbReference type="GO" id="GO:0003746">
    <property type="term" value="F:translation elongation factor activity"/>
    <property type="evidence" value="ECO:0007669"/>
    <property type="project" value="UniProtKB-UniRule"/>
</dbReference>
<dbReference type="GO" id="GO:0032790">
    <property type="term" value="P:ribosome disassembly"/>
    <property type="evidence" value="ECO:0007669"/>
    <property type="project" value="TreeGrafter"/>
</dbReference>
<dbReference type="CDD" id="cd01886">
    <property type="entry name" value="EF-G"/>
    <property type="match status" value="1"/>
</dbReference>
<dbReference type="CDD" id="cd16262">
    <property type="entry name" value="EFG_III"/>
    <property type="match status" value="1"/>
</dbReference>
<dbReference type="CDD" id="cd01434">
    <property type="entry name" value="EFG_mtEFG1_IV"/>
    <property type="match status" value="1"/>
</dbReference>
<dbReference type="CDD" id="cd03713">
    <property type="entry name" value="EFG_mtEFG_C"/>
    <property type="match status" value="1"/>
</dbReference>
<dbReference type="CDD" id="cd04088">
    <property type="entry name" value="EFG_mtEFG_II"/>
    <property type="match status" value="1"/>
</dbReference>
<dbReference type="FunFam" id="2.40.30.10:FF:000006">
    <property type="entry name" value="Elongation factor G"/>
    <property type="match status" value="1"/>
</dbReference>
<dbReference type="FunFam" id="3.30.230.10:FF:000003">
    <property type="entry name" value="Elongation factor G"/>
    <property type="match status" value="1"/>
</dbReference>
<dbReference type="FunFam" id="3.30.70.240:FF:000001">
    <property type="entry name" value="Elongation factor G"/>
    <property type="match status" value="1"/>
</dbReference>
<dbReference type="FunFam" id="3.30.70.870:FF:000001">
    <property type="entry name" value="Elongation factor G"/>
    <property type="match status" value="1"/>
</dbReference>
<dbReference type="FunFam" id="3.40.50.300:FF:000029">
    <property type="entry name" value="Elongation factor G"/>
    <property type="match status" value="1"/>
</dbReference>
<dbReference type="Gene3D" id="3.30.230.10">
    <property type="match status" value="1"/>
</dbReference>
<dbReference type="Gene3D" id="3.30.70.240">
    <property type="match status" value="1"/>
</dbReference>
<dbReference type="Gene3D" id="3.30.70.870">
    <property type="entry name" value="Elongation Factor G (Translational Gtpase), domain 3"/>
    <property type="match status" value="1"/>
</dbReference>
<dbReference type="Gene3D" id="3.40.50.300">
    <property type="entry name" value="P-loop containing nucleotide triphosphate hydrolases"/>
    <property type="match status" value="1"/>
</dbReference>
<dbReference type="Gene3D" id="2.40.30.10">
    <property type="entry name" value="Translation factors"/>
    <property type="match status" value="1"/>
</dbReference>
<dbReference type="HAMAP" id="MF_00054_B">
    <property type="entry name" value="EF_G_EF_2_B"/>
    <property type="match status" value="1"/>
</dbReference>
<dbReference type="InterPro" id="IPR041095">
    <property type="entry name" value="EFG_II"/>
</dbReference>
<dbReference type="InterPro" id="IPR009022">
    <property type="entry name" value="EFG_III"/>
</dbReference>
<dbReference type="InterPro" id="IPR035647">
    <property type="entry name" value="EFG_III/V"/>
</dbReference>
<dbReference type="InterPro" id="IPR047872">
    <property type="entry name" value="EFG_IV"/>
</dbReference>
<dbReference type="InterPro" id="IPR035649">
    <property type="entry name" value="EFG_V"/>
</dbReference>
<dbReference type="InterPro" id="IPR000640">
    <property type="entry name" value="EFG_V-like"/>
</dbReference>
<dbReference type="InterPro" id="IPR004161">
    <property type="entry name" value="EFTu-like_2"/>
</dbReference>
<dbReference type="InterPro" id="IPR031157">
    <property type="entry name" value="G_TR_CS"/>
</dbReference>
<dbReference type="InterPro" id="IPR027417">
    <property type="entry name" value="P-loop_NTPase"/>
</dbReference>
<dbReference type="InterPro" id="IPR020568">
    <property type="entry name" value="Ribosomal_Su5_D2-typ_SF"/>
</dbReference>
<dbReference type="InterPro" id="IPR014721">
    <property type="entry name" value="Ribsml_uS5_D2-typ_fold_subgr"/>
</dbReference>
<dbReference type="InterPro" id="IPR005225">
    <property type="entry name" value="Small_GTP-bd"/>
</dbReference>
<dbReference type="InterPro" id="IPR000795">
    <property type="entry name" value="T_Tr_GTP-bd_dom"/>
</dbReference>
<dbReference type="InterPro" id="IPR009000">
    <property type="entry name" value="Transl_B-barrel_sf"/>
</dbReference>
<dbReference type="InterPro" id="IPR004540">
    <property type="entry name" value="Transl_elong_EFG/EF2"/>
</dbReference>
<dbReference type="InterPro" id="IPR005517">
    <property type="entry name" value="Transl_elong_EFG/EF2_IV"/>
</dbReference>
<dbReference type="NCBIfam" id="TIGR00484">
    <property type="entry name" value="EF-G"/>
    <property type="match status" value="1"/>
</dbReference>
<dbReference type="NCBIfam" id="NF009379">
    <property type="entry name" value="PRK12740.1-3"/>
    <property type="match status" value="1"/>
</dbReference>
<dbReference type="NCBIfam" id="NF009381">
    <property type="entry name" value="PRK12740.1-5"/>
    <property type="match status" value="1"/>
</dbReference>
<dbReference type="NCBIfam" id="TIGR00231">
    <property type="entry name" value="small_GTP"/>
    <property type="match status" value="1"/>
</dbReference>
<dbReference type="PANTHER" id="PTHR43261:SF1">
    <property type="entry name" value="RIBOSOME-RELEASING FACTOR 2, MITOCHONDRIAL"/>
    <property type="match status" value="1"/>
</dbReference>
<dbReference type="PANTHER" id="PTHR43261">
    <property type="entry name" value="TRANSLATION ELONGATION FACTOR G-RELATED"/>
    <property type="match status" value="1"/>
</dbReference>
<dbReference type="Pfam" id="PF00679">
    <property type="entry name" value="EFG_C"/>
    <property type="match status" value="1"/>
</dbReference>
<dbReference type="Pfam" id="PF14492">
    <property type="entry name" value="EFG_III"/>
    <property type="match status" value="1"/>
</dbReference>
<dbReference type="Pfam" id="PF03764">
    <property type="entry name" value="EFG_IV"/>
    <property type="match status" value="1"/>
</dbReference>
<dbReference type="Pfam" id="PF00009">
    <property type="entry name" value="GTP_EFTU"/>
    <property type="match status" value="1"/>
</dbReference>
<dbReference type="Pfam" id="PF03144">
    <property type="entry name" value="GTP_EFTU_D2"/>
    <property type="match status" value="1"/>
</dbReference>
<dbReference type="PRINTS" id="PR00315">
    <property type="entry name" value="ELONGATNFCT"/>
</dbReference>
<dbReference type="SMART" id="SM00838">
    <property type="entry name" value="EFG_C"/>
    <property type="match status" value="1"/>
</dbReference>
<dbReference type="SMART" id="SM00889">
    <property type="entry name" value="EFG_IV"/>
    <property type="match status" value="1"/>
</dbReference>
<dbReference type="SUPFAM" id="SSF54980">
    <property type="entry name" value="EF-G C-terminal domain-like"/>
    <property type="match status" value="2"/>
</dbReference>
<dbReference type="SUPFAM" id="SSF52540">
    <property type="entry name" value="P-loop containing nucleoside triphosphate hydrolases"/>
    <property type="match status" value="1"/>
</dbReference>
<dbReference type="SUPFAM" id="SSF54211">
    <property type="entry name" value="Ribosomal protein S5 domain 2-like"/>
    <property type="match status" value="1"/>
</dbReference>
<dbReference type="SUPFAM" id="SSF50447">
    <property type="entry name" value="Translation proteins"/>
    <property type="match status" value="1"/>
</dbReference>
<dbReference type="PROSITE" id="PS00301">
    <property type="entry name" value="G_TR_1"/>
    <property type="match status" value="1"/>
</dbReference>
<dbReference type="PROSITE" id="PS51722">
    <property type="entry name" value="G_TR_2"/>
    <property type="match status" value="1"/>
</dbReference>
<name>EFG_EXIS2</name>
<protein>
    <recommendedName>
        <fullName evidence="1">Elongation factor G</fullName>
        <shortName evidence="1">EF-G</shortName>
    </recommendedName>
</protein>
<reference key="1">
    <citation type="submission" date="2008-04" db="EMBL/GenBank/DDBJ databases">
        <title>Complete sequence of chromosome of Exiguobacterium sibiricum 255-15.</title>
        <authorList>
            <consortium name="US DOE Joint Genome Institute"/>
            <person name="Copeland A."/>
            <person name="Lucas S."/>
            <person name="Lapidus A."/>
            <person name="Glavina del Rio T."/>
            <person name="Dalin E."/>
            <person name="Tice H."/>
            <person name="Bruce D."/>
            <person name="Goodwin L."/>
            <person name="Pitluck S."/>
            <person name="Kiss H."/>
            <person name="Chertkov O."/>
            <person name="Monk C."/>
            <person name="Brettin T."/>
            <person name="Detter J.C."/>
            <person name="Han C."/>
            <person name="Kuske C.R."/>
            <person name="Schmutz J."/>
            <person name="Larimer F."/>
            <person name="Land M."/>
            <person name="Hauser L."/>
            <person name="Kyrpides N."/>
            <person name="Mikhailova N."/>
            <person name="Vishnivetskaya T."/>
            <person name="Rodrigues D.F."/>
            <person name="Gilichinsky D."/>
            <person name="Tiedje J."/>
            <person name="Richardson P."/>
        </authorList>
    </citation>
    <scope>NUCLEOTIDE SEQUENCE [LARGE SCALE GENOMIC DNA]</scope>
    <source>
        <strain>DSM 17290 / CCUG 55495 / CIP 109462 / JCM 13490 / 255-15</strain>
    </source>
</reference>
<gene>
    <name evidence="1" type="primary">fusA</name>
    <name type="ordered locus">Exig_0093</name>
</gene>
<comment type="function">
    <text evidence="1">Catalyzes the GTP-dependent ribosomal translocation step during translation elongation. During this step, the ribosome changes from the pre-translocational (PRE) to the post-translocational (POST) state as the newly formed A-site-bound peptidyl-tRNA and P-site-bound deacylated tRNA move to the P and E sites, respectively. Catalyzes the coordinated movement of the two tRNA molecules, the mRNA and conformational changes in the ribosome.</text>
</comment>
<comment type="subcellular location">
    <subcellularLocation>
        <location evidence="1">Cytoplasm</location>
    </subcellularLocation>
</comment>
<comment type="similarity">
    <text evidence="1">Belongs to the TRAFAC class translation factor GTPase superfamily. Classic translation factor GTPase family. EF-G/EF-2 subfamily.</text>
</comment>